<feature type="chain" id="PRO_0000151847" description="ATP phosphoribosyltransferase">
    <location>
        <begin position="1"/>
        <end position="293"/>
    </location>
</feature>
<evidence type="ECO:0000255" key="1">
    <source>
        <dbReference type="HAMAP-Rule" id="MF_00079"/>
    </source>
</evidence>
<protein>
    <recommendedName>
        <fullName evidence="1">ATP phosphoribosyltransferase</fullName>
        <shortName evidence="1">ATP-PRT</shortName>
        <shortName evidence="1">ATP-PRTase</shortName>
        <ecNumber evidence="1">2.4.2.17</ecNumber>
    </recommendedName>
</protein>
<name>HIS1_NITV2</name>
<organism>
    <name type="scientific">Nitratidesulfovibrio vulgaris (strain ATCC 29579 / DSM 644 / CCUG 34227 / NCIMB 8303 / VKM B-1760 / Hildenborough)</name>
    <name type="common">Desulfovibrio vulgaris</name>
    <dbReference type="NCBI Taxonomy" id="882"/>
    <lineage>
        <taxon>Bacteria</taxon>
        <taxon>Pseudomonadati</taxon>
        <taxon>Thermodesulfobacteriota</taxon>
        <taxon>Desulfovibrionia</taxon>
        <taxon>Desulfovibrionales</taxon>
        <taxon>Desulfovibrionaceae</taxon>
        <taxon>Nitratidesulfovibrio</taxon>
    </lineage>
</organism>
<gene>
    <name evidence="1" type="primary">hisG</name>
    <name type="ordered locus">DVU_0114</name>
</gene>
<proteinExistence type="inferred from homology"/>
<accession>P62364</accession>
<dbReference type="EC" id="2.4.2.17" evidence="1"/>
<dbReference type="EMBL" id="AE017285">
    <property type="protein sequence ID" value="AAS94598.1"/>
    <property type="molecule type" value="Genomic_DNA"/>
</dbReference>
<dbReference type="RefSeq" id="WP_010937425.1">
    <property type="nucleotide sequence ID" value="NC_002937.3"/>
</dbReference>
<dbReference type="RefSeq" id="YP_009339.1">
    <property type="nucleotide sequence ID" value="NC_002937.3"/>
</dbReference>
<dbReference type="SMR" id="P62364"/>
<dbReference type="IntAct" id="P62364">
    <property type="interactions" value="1"/>
</dbReference>
<dbReference type="STRING" id="882.DVU_0114"/>
<dbReference type="PaxDb" id="882-DVU_0114"/>
<dbReference type="EnsemblBacteria" id="AAS94598">
    <property type="protein sequence ID" value="AAS94598"/>
    <property type="gene ID" value="DVU_0114"/>
</dbReference>
<dbReference type="KEGG" id="dvu:DVU_0114"/>
<dbReference type="PATRIC" id="fig|882.5.peg.112"/>
<dbReference type="eggNOG" id="COG0040">
    <property type="taxonomic scope" value="Bacteria"/>
</dbReference>
<dbReference type="HOGENOM" id="CLU_038115_1_1_7"/>
<dbReference type="OrthoDB" id="9801867at2"/>
<dbReference type="PhylomeDB" id="P62364"/>
<dbReference type="UniPathway" id="UPA00031">
    <property type="reaction ID" value="UER00006"/>
</dbReference>
<dbReference type="Proteomes" id="UP000002194">
    <property type="component" value="Chromosome"/>
</dbReference>
<dbReference type="GO" id="GO:0005737">
    <property type="term" value="C:cytoplasm"/>
    <property type="evidence" value="ECO:0007669"/>
    <property type="project" value="UniProtKB-SubCell"/>
</dbReference>
<dbReference type="GO" id="GO:0005524">
    <property type="term" value="F:ATP binding"/>
    <property type="evidence" value="ECO:0007669"/>
    <property type="project" value="UniProtKB-KW"/>
</dbReference>
<dbReference type="GO" id="GO:0003879">
    <property type="term" value="F:ATP phosphoribosyltransferase activity"/>
    <property type="evidence" value="ECO:0007669"/>
    <property type="project" value="UniProtKB-UniRule"/>
</dbReference>
<dbReference type="GO" id="GO:0000287">
    <property type="term" value="F:magnesium ion binding"/>
    <property type="evidence" value="ECO:0007669"/>
    <property type="project" value="UniProtKB-UniRule"/>
</dbReference>
<dbReference type="GO" id="GO:0000105">
    <property type="term" value="P:L-histidine biosynthetic process"/>
    <property type="evidence" value="ECO:0007669"/>
    <property type="project" value="UniProtKB-UniRule"/>
</dbReference>
<dbReference type="FunFam" id="3.40.190.10:FF:000258">
    <property type="entry name" value="ATP phosphoribosyltransferase"/>
    <property type="match status" value="1"/>
</dbReference>
<dbReference type="Gene3D" id="3.30.70.120">
    <property type="match status" value="1"/>
</dbReference>
<dbReference type="Gene3D" id="3.40.190.10">
    <property type="entry name" value="Periplasmic binding protein-like II"/>
    <property type="match status" value="2"/>
</dbReference>
<dbReference type="HAMAP" id="MF_00079">
    <property type="entry name" value="HisG_Long"/>
    <property type="match status" value="1"/>
</dbReference>
<dbReference type="InterPro" id="IPR020621">
    <property type="entry name" value="ATP-PRT_HisG_long"/>
</dbReference>
<dbReference type="InterPro" id="IPR013820">
    <property type="entry name" value="ATP_PRibTrfase_cat"/>
</dbReference>
<dbReference type="InterPro" id="IPR018198">
    <property type="entry name" value="ATP_PRibTrfase_CS"/>
</dbReference>
<dbReference type="InterPro" id="IPR001348">
    <property type="entry name" value="ATP_PRibTrfase_HisG"/>
</dbReference>
<dbReference type="InterPro" id="IPR013115">
    <property type="entry name" value="HisG_C"/>
</dbReference>
<dbReference type="InterPro" id="IPR011322">
    <property type="entry name" value="N-reg_PII-like_a/b"/>
</dbReference>
<dbReference type="InterPro" id="IPR015867">
    <property type="entry name" value="N-reg_PII/ATP_PRibTrfase_C"/>
</dbReference>
<dbReference type="NCBIfam" id="TIGR00070">
    <property type="entry name" value="hisG"/>
    <property type="match status" value="1"/>
</dbReference>
<dbReference type="NCBIfam" id="TIGR03455">
    <property type="entry name" value="HisG_C-term"/>
    <property type="match status" value="1"/>
</dbReference>
<dbReference type="PANTHER" id="PTHR21403:SF10">
    <property type="entry name" value="ATP PHOSPHORIBOSYLTRANSFERASE"/>
    <property type="match status" value="1"/>
</dbReference>
<dbReference type="PANTHER" id="PTHR21403">
    <property type="entry name" value="ATP PHOSPHORIBOSYLTRANSFERASE ATP-PRTASE"/>
    <property type="match status" value="1"/>
</dbReference>
<dbReference type="Pfam" id="PF01634">
    <property type="entry name" value="HisG"/>
    <property type="match status" value="1"/>
</dbReference>
<dbReference type="Pfam" id="PF08029">
    <property type="entry name" value="HisG_C"/>
    <property type="match status" value="1"/>
</dbReference>
<dbReference type="SUPFAM" id="SSF54913">
    <property type="entry name" value="GlnB-like"/>
    <property type="match status" value="1"/>
</dbReference>
<dbReference type="SUPFAM" id="SSF53850">
    <property type="entry name" value="Periplasmic binding protein-like II"/>
    <property type="match status" value="1"/>
</dbReference>
<dbReference type="PROSITE" id="PS01316">
    <property type="entry name" value="ATP_P_PHORIBOSYLTR"/>
    <property type="match status" value="1"/>
</dbReference>
<comment type="function">
    <text evidence="1">Catalyzes the condensation of ATP and 5-phosphoribose 1-diphosphate to form N'-(5'-phosphoribosyl)-ATP (PR-ATP). Has a crucial role in the pathway because the rate of histidine biosynthesis seems to be controlled primarily by regulation of HisG enzymatic activity.</text>
</comment>
<comment type="catalytic activity">
    <reaction evidence="1">
        <text>1-(5-phospho-beta-D-ribosyl)-ATP + diphosphate = 5-phospho-alpha-D-ribose 1-diphosphate + ATP</text>
        <dbReference type="Rhea" id="RHEA:18473"/>
        <dbReference type="ChEBI" id="CHEBI:30616"/>
        <dbReference type="ChEBI" id="CHEBI:33019"/>
        <dbReference type="ChEBI" id="CHEBI:58017"/>
        <dbReference type="ChEBI" id="CHEBI:73183"/>
        <dbReference type="EC" id="2.4.2.17"/>
    </reaction>
</comment>
<comment type="cofactor">
    <cofactor evidence="1">
        <name>Mg(2+)</name>
        <dbReference type="ChEBI" id="CHEBI:18420"/>
    </cofactor>
</comment>
<comment type="activity regulation">
    <text evidence="1">Feedback inhibited by histidine.</text>
</comment>
<comment type="pathway">
    <text evidence="1">Amino-acid biosynthesis; L-histidine biosynthesis; L-histidine from 5-phospho-alpha-D-ribose 1-diphosphate: step 1/9.</text>
</comment>
<comment type="subcellular location">
    <subcellularLocation>
        <location evidence="1">Cytoplasm</location>
    </subcellularLocation>
</comment>
<comment type="similarity">
    <text evidence="1">Belongs to the ATP phosphoribosyltransferase family. Long subfamily.</text>
</comment>
<keyword id="KW-0028">Amino-acid biosynthesis</keyword>
<keyword id="KW-0067">ATP-binding</keyword>
<keyword id="KW-0963">Cytoplasm</keyword>
<keyword id="KW-0328">Glycosyltransferase</keyword>
<keyword id="KW-0368">Histidine biosynthesis</keyword>
<keyword id="KW-0460">Magnesium</keyword>
<keyword id="KW-0479">Metal-binding</keyword>
<keyword id="KW-0547">Nucleotide-binding</keyword>
<keyword id="KW-1185">Reference proteome</keyword>
<keyword id="KW-0808">Transferase</keyword>
<sequence length="293" mass="32357">MSIRTPMKLGIPKGSLEEATINLLARSGWKIRKHHRNYFPEINDPELTARLCRVQEIPRYIEDGILDVGLTGKDWLLETGSDVVVVSDLVYSKVSNRPARWVLAVAGDSPYTRPEDLAGKRIATELLGVTKRYFADAGIEVNVQYSWGATEAKVVEGLADAIVEVTETGTTIKAHGLRIISEVLLTNTVLIANRAAWEDPCRRRKIEQIDLLLQGALRADSLVGLKMNVPTRCLDAVLDQLPSLNSPTVAGLRDNTWFAVEIVVDNGVVRDLIPRLREAGAEGIIEYALNKVI</sequence>
<reference key="1">
    <citation type="journal article" date="2004" name="Nat. Biotechnol.">
        <title>The genome sequence of the anaerobic, sulfate-reducing bacterium Desulfovibrio vulgaris Hildenborough.</title>
        <authorList>
            <person name="Heidelberg J.F."/>
            <person name="Seshadri R."/>
            <person name="Haveman S.A."/>
            <person name="Hemme C.L."/>
            <person name="Paulsen I.T."/>
            <person name="Kolonay J.F."/>
            <person name="Eisen J.A."/>
            <person name="Ward N.L."/>
            <person name="Methe B.A."/>
            <person name="Brinkac L.M."/>
            <person name="Daugherty S.C."/>
            <person name="DeBoy R.T."/>
            <person name="Dodson R.J."/>
            <person name="Durkin A.S."/>
            <person name="Madupu R."/>
            <person name="Nelson W.C."/>
            <person name="Sullivan S.A."/>
            <person name="Fouts D.E."/>
            <person name="Haft D.H."/>
            <person name="Selengut J."/>
            <person name="Peterson J.D."/>
            <person name="Davidsen T.M."/>
            <person name="Zafar N."/>
            <person name="Zhou L."/>
            <person name="Radune D."/>
            <person name="Dimitrov G."/>
            <person name="Hance M."/>
            <person name="Tran K."/>
            <person name="Khouri H.M."/>
            <person name="Gill J."/>
            <person name="Utterback T.R."/>
            <person name="Feldblyum T.V."/>
            <person name="Wall J.D."/>
            <person name="Voordouw G."/>
            <person name="Fraser C.M."/>
        </authorList>
    </citation>
    <scope>NUCLEOTIDE SEQUENCE [LARGE SCALE GENOMIC DNA]</scope>
    <source>
        <strain>ATCC 29579 / DSM 644 / CCUG 34227 / NCIMB 8303 / VKM B-1760 / Hildenborough</strain>
    </source>
</reference>